<feature type="chain" id="PRO_1000096683" description="DNA mismatch repair protein MutL">
    <location>
        <begin position="1"/>
        <end position="618"/>
    </location>
</feature>
<feature type="region of interest" description="Disordered" evidence="2">
    <location>
        <begin position="367"/>
        <end position="402"/>
    </location>
</feature>
<feature type="compositionally biased region" description="Low complexity" evidence="2">
    <location>
        <begin position="367"/>
        <end position="381"/>
    </location>
</feature>
<feature type="compositionally biased region" description="Gly residues" evidence="2">
    <location>
        <begin position="382"/>
        <end position="392"/>
    </location>
</feature>
<gene>
    <name evidence="1" type="primary">mutL</name>
    <name type="ordered locus">SeHA_C4777</name>
</gene>
<comment type="function">
    <text evidence="1">This protein is involved in the repair of mismatches in DNA. It is required for dam-dependent methyl-directed DNA mismatch repair. May act as a 'molecular matchmaker', a protein that promotes the formation of a stable complex between two or more DNA-binding proteins in an ATP-dependent manner without itself being part of a final effector complex.</text>
</comment>
<comment type="similarity">
    <text evidence="1">Belongs to the DNA mismatch repair MutL/HexB family.</text>
</comment>
<organism>
    <name type="scientific">Salmonella heidelberg (strain SL476)</name>
    <dbReference type="NCBI Taxonomy" id="454169"/>
    <lineage>
        <taxon>Bacteria</taxon>
        <taxon>Pseudomonadati</taxon>
        <taxon>Pseudomonadota</taxon>
        <taxon>Gammaproteobacteria</taxon>
        <taxon>Enterobacterales</taxon>
        <taxon>Enterobacteriaceae</taxon>
        <taxon>Salmonella</taxon>
    </lineage>
</organism>
<dbReference type="EMBL" id="CP001120">
    <property type="protein sequence ID" value="ACF68855.1"/>
    <property type="molecule type" value="Genomic_DNA"/>
</dbReference>
<dbReference type="RefSeq" id="WP_001122540.1">
    <property type="nucleotide sequence ID" value="NC_011083.1"/>
</dbReference>
<dbReference type="SMR" id="B4TFA4"/>
<dbReference type="KEGG" id="seh:SeHA_C4777"/>
<dbReference type="HOGENOM" id="CLU_004131_5_1_6"/>
<dbReference type="Proteomes" id="UP000001866">
    <property type="component" value="Chromosome"/>
</dbReference>
<dbReference type="GO" id="GO:0032300">
    <property type="term" value="C:mismatch repair complex"/>
    <property type="evidence" value="ECO:0007669"/>
    <property type="project" value="InterPro"/>
</dbReference>
<dbReference type="GO" id="GO:0005524">
    <property type="term" value="F:ATP binding"/>
    <property type="evidence" value="ECO:0007669"/>
    <property type="project" value="InterPro"/>
</dbReference>
<dbReference type="GO" id="GO:0016887">
    <property type="term" value="F:ATP hydrolysis activity"/>
    <property type="evidence" value="ECO:0007669"/>
    <property type="project" value="InterPro"/>
</dbReference>
<dbReference type="GO" id="GO:0140664">
    <property type="term" value="F:ATP-dependent DNA damage sensor activity"/>
    <property type="evidence" value="ECO:0007669"/>
    <property type="project" value="InterPro"/>
</dbReference>
<dbReference type="GO" id="GO:0030983">
    <property type="term" value="F:mismatched DNA binding"/>
    <property type="evidence" value="ECO:0007669"/>
    <property type="project" value="InterPro"/>
</dbReference>
<dbReference type="GO" id="GO:0006298">
    <property type="term" value="P:mismatch repair"/>
    <property type="evidence" value="ECO:0007669"/>
    <property type="project" value="UniProtKB-UniRule"/>
</dbReference>
<dbReference type="CDD" id="cd16926">
    <property type="entry name" value="HATPase_MutL-MLH-PMS-like"/>
    <property type="match status" value="1"/>
</dbReference>
<dbReference type="CDD" id="cd03482">
    <property type="entry name" value="MutL_Trans_MutL"/>
    <property type="match status" value="1"/>
</dbReference>
<dbReference type="FunFam" id="3.30.230.10:FF:000013">
    <property type="entry name" value="DNA mismatch repair endonuclease MutL"/>
    <property type="match status" value="1"/>
</dbReference>
<dbReference type="FunFam" id="3.30.565.10:FF:000003">
    <property type="entry name" value="DNA mismatch repair endonuclease MutL"/>
    <property type="match status" value="1"/>
</dbReference>
<dbReference type="FunFam" id="3.30.1370.100:FF:000002">
    <property type="entry name" value="DNA mismatch repair protein MutL"/>
    <property type="match status" value="1"/>
</dbReference>
<dbReference type="Gene3D" id="3.30.230.10">
    <property type="match status" value="1"/>
</dbReference>
<dbReference type="Gene3D" id="3.30.565.10">
    <property type="entry name" value="Histidine kinase-like ATPase, C-terminal domain"/>
    <property type="match status" value="1"/>
</dbReference>
<dbReference type="Gene3D" id="3.30.1540.20">
    <property type="entry name" value="MutL, C-terminal domain, dimerisation subdomain"/>
    <property type="match status" value="1"/>
</dbReference>
<dbReference type="Gene3D" id="3.30.1370.100">
    <property type="entry name" value="MutL, C-terminal domain, regulatory subdomain"/>
    <property type="match status" value="1"/>
</dbReference>
<dbReference type="HAMAP" id="MF_00149">
    <property type="entry name" value="DNA_mis_repair"/>
    <property type="match status" value="1"/>
</dbReference>
<dbReference type="InterPro" id="IPR014762">
    <property type="entry name" value="DNA_mismatch_repair_CS"/>
</dbReference>
<dbReference type="InterPro" id="IPR020667">
    <property type="entry name" value="DNA_mismatch_repair_MutL"/>
</dbReference>
<dbReference type="InterPro" id="IPR013507">
    <property type="entry name" value="DNA_mismatch_S5_2-like"/>
</dbReference>
<dbReference type="InterPro" id="IPR036890">
    <property type="entry name" value="HATPase_C_sf"/>
</dbReference>
<dbReference type="InterPro" id="IPR002099">
    <property type="entry name" value="MutL/Mlh/PMS"/>
</dbReference>
<dbReference type="InterPro" id="IPR038973">
    <property type="entry name" value="MutL/Mlh/Pms-like"/>
</dbReference>
<dbReference type="InterPro" id="IPR014790">
    <property type="entry name" value="MutL_C"/>
</dbReference>
<dbReference type="InterPro" id="IPR042120">
    <property type="entry name" value="MutL_C_dimsub"/>
</dbReference>
<dbReference type="InterPro" id="IPR042121">
    <property type="entry name" value="MutL_C_regsub"/>
</dbReference>
<dbReference type="InterPro" id="IPR037198">
    <property type="entry name" value="MutL_C_sf"/>
</dbReference>
<dbReference type="InterPro" id="IPR020568">
    <property type="entry name" value="Ribosomal_Su5_D2-typ_SF"/>
</dbReference>
<dbReference type="InterPro" id="IPR014721">
    <property type="entry name" value="Ribsml_uS5_D2-typ_fold_subgr"/>
</dbReference>
<dbReference type="NCBIfam" id="TIGR00585">
    <property type="entry name" value="mutl"/>
    <property type="match status" value="1"/>
</dbReference>
<dbReference type="NCBIfam" id="NF000948">
    <property type="entry name" value="PRK00095.1-1"/>
    <property type="match status" value="1"/>
</dbReference>
<dbReference type="PANTHER" id="PTHR10073">
    <property type="entry name" value="DNA MISMATCH REPAIR PROTEIN MLH, PMS, MUTL"/>
    <property type="match status" value="1"/>
</dbReference>
<dbReference type="PANTHER" id="PTHR10073:SF12">
    <property type="entry name" value="DNA MISMATCH REPAIR PROTEIN MLH1"/>
    <property type="match status" value="1"/>
</dbReference>
<dbReference type="Pfam" id="PF01119">
    <property type="entry name" value="DNA_mis_repair"/>
    <property type="match status" value="1"/>
</dbReference>
<dbReference type="Pfam" id="PF13589">
    <property type="entry name" value="HATPase_c_3"/>
    <property type="match status" value="1"/>
</dbReference>
<dbReference type="Pfam" id="PF08676">
    <property type="entry name" value="MutL_C"/>
    <property type="match status" value="1"/>
</dbReference>
<dbReference type="SMART" id="SM01340">
    <property type="entry name" value="DNA_mis_repair"/>
    <property type="match status" value="1"/>
</dbReference>
<dbReference type="SMART" id="SM00853">
    <property type="entry name" value="MutL_C"/>
    <property type="match status" value="1"/>
</dbReference>
<dbReference type="SUPFAM" id="SSF55874">
    <property type="entry name" value="ATPase domain of HSP90 chaperone/DNA topoisomerase II/histidine kinase"/>
    <property type="match status" value="1"/>
</dbReference>
<dbReference type="SUPFAM" id="SSF118116">
    <property type="entry name" value="DNA mismatch repair protein MutL"/>
    <property type="match status" value="1"/>
</dbReference>
<dbReference type="SUPFAM" id="SSF54211">
    <property type="entry name" value="Ribosomal protein S5 domain 2-like"/>
    <property type="match status" value="1"/>
</dbReference>
<dbReference type="PROSITE" id="PS00058">
    <property type="entry name" value="DNA_MISMATCH_REPAIR_1"/>
    <property type="match status" value="1"/>
</dbReference>
<reference key="1">
    <citation type="journal article" date="2011" name="J. Bacteriol.">
        <title>Comparative genomics of 28 Salmonella enterica isolates: evidence for CRISPR-mediated adaptive sublineage evolution.</title>
        <authorList>
            <person name="Fricke W.F."/>
            <person name="Mammel M.K."/>
            <person name="McDermott P.F."/>
            <person name="Tartera C."/>
            <person name="White D.G."/>
            <person name="Leclerc J.E."/>
            <person name="Ravel J."/>
            <person name="Cebula T.A."/>
        </authorList>
    </citation>
    <scope>NUCLEOTIDE SEQUENCE [LARGE SCALE GENOMIC DNA]</scope>
    <source>
        <strain>SL476</strain>
    </source>
</reference>
<accession>B4TFA4</accession>
<protein>
    <recommendedName>
        <fullName evidence="1">DNA mismatch repair protein MutL</fullName>
    </recommendedName>
</protein>
<sequence length="618" mass="67747">MPIQVLPPQLANQIAAGEVVERPASVVKELVENSLDAGATRVDIDIERGGAKLIRIRDNGCGIKKEELALALARHATSKIASLDDLEAIISLGFRGEALASISSVSRLTLTSRTAEQAEAWQAYAEGRDMDVTVKPAAHPVGTTLEVLDLFYNTPARRKFMRTEKTEFNHIDEIIRRIALARFDVTLNLSHNGKLVRQYRAVAKDGQKERRLGAICGTPFLEQALAIEWQHGDLTLRGWVADPNHTTTALTEIQYCYVNGRMMRDRLINHAIRQACEDKLGADQQPAFVLYLEIDPHQVDVNVHPAKHEVRFHQSRLVHDFIYQGVLSVLQQQTETTLPLEDIAPAPRHVPENRIAAGRNHFAVPAEPTAAREPATPRYSGGASGGNGGRQSAGGWPHAQPGYQKQQGEVYRALLQTPTTSPAPEAVAPALDGHSQSFGRVLTIVCGDCALLEHAGTIQLLSLPVAERWLRQAQLTPGQSPVCAQPLLIPLRLKVSADEKAALQKAQSLLGELGIEFQSDAQHVTIRAVPLPLRQQNLQILIPELIGYLAQQTTFATVNIAQWIARNVQSEHPQWSMAQAISLLADVERLCPQLVKAPPGGLLQPVDLHSAMNALKHE</sequence>
<proteinExistence type="inferred from homology"/>
<keyword id="KW-0227">DNA damage</keyword>
<keyword id="KW-0234">DNA repair</keyword>
<evidence type="ECO:0000255" key="1">
    <source>
        <dbReference type="HAMAP-Rule" id="MF_00149"/>
    </source>
</evidence>
<evidence type="ECO:0000256" key="2">
    <source>
        <dbReference type="SAM" id="MobiDB-lite"/>
    </source>
</evidence>
<name>MUTL_SALHS</name>